<gene>
    <name type="ordered locus">CA_C2969</name>
</gene>
<evidence type="ECO:0000255" key="1">
    <source>
        <dbReference type="HAMAP-Rule" id="MF_00527"/>
    </source>
</evidence>
<protein>
    <recommendedName>
        <fullName evidence="1">Putative 3-methyladenine DNA glycosylase</fullName>
        <ecNumber evidence="1">3.2.2.-</ecNumber>
    </recommendedName>
</protein>
<keyword id="KW-0227">DNA damage</keyword>
<keyword id="KW-0234">DNA repair</keyword>
<keyword id="KW-0378">Hydrolase</keyword>
<keyword id="KW-1185">Reference proteome</keyword>
<reference key="1">
    <citation type="journal article" date="2001" name="J. Bacteriol.">
        <title>Genome sequence and comparative analysis of the solvent-producing bacterium Clostridium acetobutylicum.</title>
        <authorList>
            <person name="Noelling J."/>
            <person name="Breton G."/>
            <person name="Omelchenko M.V."/>
            <person name="Makarova K.S."/>
            <person name="Zeng Q."/>
            <person name="Gibson R."/>
            <person name="Lee H.M."/>
            <person name="Dubois J."/>
            <person name="Qiu D."/>
            <person name="Hitti J."/>
            <person name="Wolf Y.I."/>
            <person name="Tatusov R.L."/>
            <person name="Sabathe F."/>
            <person name="Doucette-Stamm L.A."/>
            <person name="Soucaille P."/>
            <person name="Daly M.J."/>
            <person name="Bennett G.N."/>
            <person name="Koonin E.V."/>
            <person name="Smith D.R."/>
        </authorList>
    </citation>
    <scope>NUCLEOTIDE SEQUENCE [LARGE SCALE GENOMIC DNA]</scope>
    <source>
        <strain>ATCC 824 / DSM 792 / JCM 1419 / IAM 19013 / LMG 5710 / NBRC 13948 / NRRL B-527 / VKM B-1787 / 2291 / W</strain>
    </source>
</reference>
<accession>Q97EY6</accession>
<dbReference type="EC" id="3.2.2.-" evidence="1"/>
<dbReference type="EMBL" id="AE001437">
    <property type="protein sequence ID" value="AAK80911.1"/>
    <property type="molecule type" value="Genomic_DNA"/>
</dbReference>
<dbReference type="PIR" id="D97265">
    <property type="entry name" value="D97265"/>
</dbReference>
<dbReference type="RefSeq" id="NP_349571.1">
    <property type="nucleotide sequence ID" value="NC_003030.1"/>
</dbReference>
<dbReference type="RefSeq" id="WP_010966252.1">
    <property type="nucleotide sequence ID" value="NC_003030.1"/>
</dbReference>
<dbReference type="SMR" id="Q97EY6"/>
<dbReference type="STRING" id="272562.CA_C2969"/>
<dbReference type="KEGG" id="cac:CA_C2969"/>
<dbReference type="PATRIC" id="fig|272562.8.peg.3153"/>
<dbReference type="eggNOG" id="COG2094">
    <property type="taxonomic scope" value="Bacteria"/>
</dbReference>
<dbReference type="HOGENOM" id="CLU_060471_0_2_9"/>
<dbReference type="OrthoDB" id="9794313at2"/>
<dbReference type="Proteomes" id="UP000000814">
    <property type="component" value="Chromosome"/>
</dbReference>
<dbReference type="GO" id="GO:0003905">
    <property type="term" value="F:alkylbase DNA N-glycosylase activity"/>
    <property type="evidence" value="ECO:0007669"/>
    <property type="project" value="InterPro"/>
</dbReference>
<dbReference type="GO" id="GO:0003677">
    <property type="term" value="F:DNA binding"/>
    <property type="evidence" value="ECO:0007669"/>
    <property type="project" value="InterPro"/>
</dbReference>
<dbReference type="GO" id="GO:0006284">
    <property type="term" value="P:base-excision repair"/>
    <property type="evidence" value="ECO:0007669"/>
    <property type="project" value="InterPro"/>
</dbReference>
<dbReference type="CDD" id="cd00540">
    <property type="entry name" value="AAG"/>
    <property type="match status" value="1"/>
</dbReference>
<dbReference type="FunFam" id="3.10.300.10:FF:000001">
    <property type="entry name" value="Putative 3-methyladenine DNA glycosylase"/>
    <property type="match status" value="1"/>
</dbReference>
<dbReference type="Gene3D" id="3.10.300.10">
    <property type="entry name" value="Methylpurine-DNA glycosylase (MPG)"/>
    <property type="match status" value="1"/>
</dbReference>
<dbReference type="HAMAP" id="MF_00527">
    <property type="entry name" value="3MGH"/>
    <property type="match status" value="1"/>
</dbReference>
<dbReference type="InterPro" id="IPR011034">
    <property type="entry name" value="Formyl_transferase-like_C_sf"/>
</dbReference>
<dbReference type="InterPro" id="IPR003180">
    <property type="entry name" value="MPG"/>
</dbReference>
<dbReference type="InterPro" id="IPR036995">
    <property type="entry name" value="MPG_sf"/>
</dbReference>
<dbReference type="NCBIfam" id="TIGR00567">
    <property type="entry name" value="3mg"/>
    <property type="match status" value="1"/>
</dbReference>
<dbReference type="NCBIfam" id="NF002001">
    <property type="entry name" value="PRK00802.1-1"/>
    <property type="match status" value="1"/>
</dbReference>
<dbReference type="NCBIfam" id="NF002003">
    <property type="entry name" value="PRK00802.1-3"/>
    <property type="match status" value="1"/>
</dbReference>
<dbReference type="PANTHER" id="PTHR10429">
    <property type="entry name" value="DNA-3-METHYLADENINE GLYCOSYLASE"/>
    <property type="match status" value="1"/>
</dbReference>
<dbReference type="PANTHER" id="PTHR10429:SF0">
    <property type="entry name" value="DNA-3-METHYLADENINE GLYCOSYLASE"/>
    <property type="match status" value="1"/>
</dbReference>
<dbReference type="Pfam" id="PF02245">
    <property type="entry name" value="Pur_DNA_glyco"/>
    <property type="match status" value="1"/>
</dbReference>
<dbReference type="SUPFAM" id="SSF50486">
    <property type="entry name" value="FMT C-terminal domain-like"/>
    <property type="match status" value="1"/>
</dbReference>
<feature type="chain" id="PRO_0000100079" description="Putative 3-methyladenine DNA glycosylase">
    <location>
        <begin position="1"/>
        <end position="205"/>
    </location>
</feature>
<comment type="similarity">
    <text evidence="1">Belongs to the DNA glycosylase MPG family.</text>
</comment>
<organism>
    <name type="scientific">Clostridium acetobutylicum (strain ATCC 824 / DSM 792 / JCM 1419 / IAM 19013 / LMG 5710 / NBRC 13948 / NRRL B-527 / VKM B-1787 / 2291 / W)</name>
    <dbReference type="NCBI Taxonomy" id="272562"/>
    <lineage>
        <taxon>Bacteria</taxon>
        <taxon>Bacillati</taxon>
        <taxon>Bacillota</taxon>
        <taxon>Clostridia</taxon>
        <taxon>Eubacteriales</taxon>
        <taxon>Clostridiaceae</taxon>
        <taxon>Clostridium</taxon>
    </lineage>
</organism>
<name>3MGH_CLOAB</name>
<proteinExistence type="inferred from homology"/>
<sequence>MKLIREFYSRDTIVVAKELLGKVLVHEVNGIRTSGKIVEVEAYRGINDKGAHAYGGRRTPRTEALYGPAGHAYVYFIYGLYYCMNVVAMQEGIPEGVLIRAIEPIEGIEVMSERRFKKLFNDLTKYQLKNLTNGPSKLCSAMEIRREQNLMDLNGDELYIEEGKNESFEIVEAKRVGIDYAEEAKDYLWRFYIKGNKCVSVLKKD</sequence>